<comment type="function">
    <text>Regulates the chamber-specific expression of myosin isoforms by activating the expression of the ventricle myosin heavy chain-1 (Vmhc1) and suppressing the expression of the atrial myosin heavy chain-1 (Amhc1) in the ventricles. May play a critical role in establishing chamber-specific gene expression in the developing heart.</text>
</comment>
<comment type="subcellular location">
    <subcellularLocation>
        <location evidence="1">Nucleus</location>
    </subcellularLocation>
</comment>
<comment type="tissue specificity">
    <text>Ventricles of the heart, developing feather buds, retina, hindbrain.</text>
</comment>
<comment type="developmental stage">
    <text>All stages of heart development.</text>
</comment>
<comment type="similarity">
    <text evidence="3">Belongs to the TALE/IRO homeobox family.</text>
</comment>
<accession>Q9YGS0</accession>
<sequence length="485" mass="52774">MSYPQFGYPYSSAPQFLMSTNSLTPCCESGGRTLPESGPAAPAQTPVYCPVYESRLLATARHELNSAAALGVYGGPYGGPQGYGNYVTYGTEAPAFYSLNTLEAKDGGGSAHAGISPAAAYYPYEHSLSQYQYDRYGAMDGGTRRKNATRETTSTLKAWLQEHRKNPYPTKGEKIMLAIITKMTLTQVSTWFANARRRLKKENKMTWPPRNKCSDEKRPYEEEEEEEEECSQEDAMKSEKAEEPTGKEEKELELSDLEDLDAAESESSECEMRRPFPHPHPHPLPGGGPPPRAAEPPAAAAEEEEEEAAERARGCLKPAAEECEAALLGARPRGCEAKLCFPQGQPLLEAKPRIWSLAHTATSLNQAEYPSCMLKRSGGSAAAAVSAPVSVMDRHQDSPVTNLRNWVDGVFHDPLFRHSTLNQALSNTTVSWATTKGAILETGALGRSVGNGANVLKGQLANLAHQDSSKEFLAFPKAGSKMFCS</sequence>
<reference key="1">
    <citation type="journal article" date="1999" name="Science">
        <title>Regulation of chamber-specific gene expression in the developing heart by Irx4.</title>
        <authorList>
            <person name="Bao Z.-Z."/>
            <person name="Bruneau B.G."/>
            <person name="Seidman J.G."/>
            <person name="Seidman C.E."/>
            <person name="Cepko C.L."/>
        </authorList>
    </citation>
    <scope>NUCLEOTIDE SEQUENCE [MRNA]</scope>
    <source>
        <tissue>Embryonic retina</tissue>
    </source>
</reference>
<feature type="chain" id="PRO_0000049159" description="Iroquois-class homeodomain protein IRX-4">
    <location>
        <begin position="1"/>
        <end position="485"/>
    </location>
</feature>
<feature type="DNA-binding region" description="Homeobox; TALE-type" evidence="1">
    <location>
        <begin position="142"/>
        <end position="203"/>
    </location>
</feature>
<feature type="region of interest" description="Disordered" evidence="2">
    <location>
        <begin position="206"/>
        <end position="313"/>
    </location>
</feature>
<feature type="compositionally biased region" description="Acidic residues" evidence="2">
    <location>
        <begin position="221"/>
        <end position="232"/>
    </location>
</feature>
<feature type="compositionally biased region" description="Basic and acidic residues" evidence="2">
    <location>
        <begin position="234"/>
        <end position="253"/>
    </location>
</feature>
<feature type="compositionally biased region" description="Acidic residues" evidence="2">
    <location>
        <begin position="254"/>
        <end position="269"/>
    </location>
</feature>
<feature type="compositionally biased region" description="Pro residues" evidence="2">
    <location>
        <begin position="282"/>
        <end position="294"/>
    </location>
</feature>
<dbReference type="EMBL" id="AF091504">
    <property type="protein sequence ID" value="AAD16100.1"/>
    <property type="molecule type" value="mRNA"/>
</dbReference>
<dbReference type="RefSeq" id="NP_001001744.1">
    <property type="nucleotide sequence ID" value="NM_001001744.2"/>
</dbReference>
<dbReference type="RefSeq" id="XP_015137809.1">
    <property type="nucleotide sequence ID" value="XM_015282323.4"/>
</dbReference>
<dbReference type="RefSeq" id="XP_015137810.1">
    <property type="nucleotide sequence ID" value="XM_015282324.1"/>
</dbReference>
<dbReference type="RefSeq" id="XP_046766134.1">
    <property type="nucleotide sequence ID" value="XM_046910178.1"/>
</dbReference>
<dbReference type="RefSeq" id="XP_046766135.1">
    <property type="nucleotide sequence ID" value="XM_046910179.1"/>
</dbReference>
<dbReference type="RefSeq" id="XP_046773081.1">
    <property type="nucleotide sequence ID" value="XM_046917125.1"/>
</dbReference>
<dbReference type="SMR" id="Q9YGS0"/>
<dbReference type="STRING" id="9031.ENSGALP00000036193"/>
<dbReference type="Ensembl" id="ENSGALT00010018008.1">
    <property type="protein sequence ID" value="ENSGALP00010009914.1"/>
    <property type="gene ID" value="ENSGALG00010007564.1"/>
</dbReference>
<dbReference type="GeneID" id="373974"/>
<dbReference type="KEGG" id="gga:373974"/>
<dbReference type="CTD" id="50805"/>
<dbReference type="VEuPathDB" id="HostDB:geneid_373974"/>
<dbReference type="GeneTree" id="ENSGT00940000158596"/>
<dbReference type="InParanoid" id="Q9YGS0"/>
<dbReference type="OMA" id="AEPPGCE"/>
<dbReference type="OrthoDB" id="5399138at2759"/>
<dbReference type="PhylomeDB" id="Q9YGS0"/>
<dbReference type="PRO" id="PR:Q9YGS0"/>
<dbReference type="Proteomes" id="UP000000539">
    <property type="component" value="Chromosome 2"/>
</dbReference>
<dbReference type="Bgee" id="ENSGALG00000022896">
    <property type="expression patterns" value="Expressed in heart"/>
</dbReference>
<dbReference type="GO" id="GO:0005634">
    <property type="term" value="C:nucleus"/>
    <property type="evidence" value="ECO:0000318"/>
    <property type="project" value="GO_Central"/>
</dbReference>
<dbReference type="GO" id="GO:0000981">
    <property type="term" value="F:DNA-binding transcription factor activity, RNA polymerase II-specific"/>
    <property type="evidence" value="ECO:0000318"/>
    <property type="project" value="GO_Central"/>
</dbReference>
<dbReference type="GO" id="GO:0000978">
    <property type="term" value="F:RNA polymerase II cis-regulatory region sequence-specific DNA binding"/>
    <property type="evidence" value="ECO:0000318"/>
    <property type="project" value="GO_Central"/>
</dbReference>
<dbReference type="GO" id="GO:0048468">
    <property type="term" value="P:cell development"/>
    <property type="evidence" value="ECO:0000318"/>
    <property type="project" value="GO_Central"/>
</dbReference>
<dbReference type="GO" id="GO:0007507">
    <property type="term" value="P:heart development"/>
    <property type="evidence" value="ECO:0007669"/>
    <property type="project" value="Ensembl"/>
</dbReference>
<dbReference type="GO" id="GO:0030182">
    <property type="term" value="P:neuron differentiation"/>
    <property type="evidence" value="ECO:0000318"/>
    <property type="project" value="GO_Central"/>
</dbReference>
<dbReference type="GO" id="GO:0006357">
    <property type="term" value="P:regulation of transcription by RNA polymerase II"/>
    <property type="evidence" value="ECO:0000318"/>
    <property type="project" value="GO_Central"/>
</dbReference>
<dbReference type="CDD" id="cd00086">
    <property type="entry name" value="homeodomain"/>
    <property type="match status" value="1"/>
</dbReference>
<dbReference type="FunFam" id="1.10.10.60:FF:000003">
    <property type="entry name" value="Iroquois-class homeobox protein IRX"/>
    <property type="match status" value="1"/>
</dbReference>
<dbReference type="Gene3D" id="1.10.10.60">
    <property type="entry name" value="Homeodomain-like"/>
    <property type="match status" value="1"/>
</dbReference>
<dbReference type="InterPro" id="IPR001356">
    <property type="entry name" value="HD"/>
</dbReference>
<dbReference type="InterPro" id="IPR017970">
    <property type="entry name" value="Homeobox_CS"/>
</dbReference>
<dbReference type="InterPro" id="IPR009057">
    <property type="entry name" value="Homeodomain-like_sf"/>
</dbReference>
<dbReference type="InterPro" id="IPR003893">
    <property type="entry name" value="Iroquois_homeo"/>
</dbReference>
<dbReference type="InterPro" id="IPR008422">
    <property type="entry name" value="KN_HD"/>
</dbReference>
<dbReference type="PANTHER" id="PTHR11211">
    <property type="entry name" value="IROQUOIS-CLASS HOMEODOMAIN PROTEIN IRX"/>
    <property type="match status" value="1"/>
</dbReference>
<dbReference type="PANTHER" id="PTHR11211:SF16">
    <property type="entry name" value="IROQUOIS-CLASS HOMEODOMAIN PROTEIN IRX-4"/>
    <property type="match status" value="1"/>
</dbReference>
<dbReference type="Pfam" id="PF05920">
    <property type="entry name" value="Homeobox_KN"/>
    <property type="match status" value="1"/>
</dbReference>
<dbReference type="SMART" id="SM00389">
    <property type="entry name" value="HOX"/>
    <property type="match status" value="1"/>
</dbReference>
<dbReference type="SMART" id="SM00548">
    <property type="entry name" value="IRO"/>
    <property type="match status" value="1"/>
</dbReference>
<dbReference type="SUPFAM" id="SSF46689">
    <property type="entry name" value="Homeodomain-like"/>
    <property type="match status" value="1"/>
</dbReference>
<dbReference type="PROSITE" id="PS00027">
    <property type="entry name" value="HOMEOBOX_1"/>
    <property type="match status" value="1"/>
</dbReference>
<dbReference type="PROSITE" id="PS50071">
    <property type="entry name" value="HOMEOBOX_2"/>
    <property type="match status" value="1"/>
</dbReference>
<keyword id="KW-0010">Activator</keyword>
<keyword id="KW-0217">Developmental protein</keyword>
<keyword id="KW-0238">DNA-binding</keyword>
<keyword id="KW-0371">Homeobox</keyword>
<keyword id="KW-0539">Nucleus</keyword>
<keyword id="KW-1185">Reference proteome</keyword>
<keyword id="KW-0678">Repressor</keyword>
<keyword id="KW-0804">Transcription</keyword>
<keyword id="KW-0805">Transcription regulation</keyword>
<proteinExistence type="evidence at transcript level"/>
<gene>
    <name type="primary">IRX4</name>
</gene>
<name>IRX4_CHICK</name>
<evidence type="ECO:0000255" key="1">
    <source>
        <dbReference type="PROSITE-ProRule" id="PRU00108"/>
    </source>
</evidence>
<evidence type="ECO:0000256" key="2">
    <source>
        <dbReference type="SAM" id="MobiDB-lite"/>
    </source>
</evidence>
<evidence type="ECO:0000305" key="3"/>
<protein>
    <recommendedName>
        <fullName>Iroquois-class homeodomain protein IRX-4</fullName>
    </recommendedName>
    <alternativeName>
        <fullName>Iroquois homeobox protein 4</fullName>
    </alternativeName>
</protein>
<organism>
    <name type="scientific">Gallus gallus</name>
    <name type="common">Chicken</name>
    <dbReference type="NCBI Taxonomy" id="9031"/>
    <lineage>
        <taxon>Eukaryota</taxon>
        <taxon>Metazoa</taxon>
        <taxon>Chordata</taxon>
        <taxon>Craniata</taxon>
        <taxon>Vertebrata</taxon>
        <taxon>Euteleostomi</taxon>
        <taxon>Archelosauria</taxon>
        <taxon>Archosauria</taxon>
        <taxon>Dinosauria</taxon>
        <taxon>Saurischia</taxon>
        <taxon>Theropoda</taxon>
        <taxon>Coelurosauria</taxon>
        <taxon>Aves</taxon>
        <taxon>Neognathae</taxon>
        <taxon>Galloanserae</taxon>
        <taxon>Galliformes</taxon>
        <taxon>Phasianidae</taxon>
        <taxon>Phasianinae</taxon>
        <taxon>Gallus</taxon>
    </lineage>
</organism>